<keyword id="KW-1185">Reference proteome</keyword>
<keyword id="KW-0687">Ribonucleoprotein</keyword>
<keyword id="KW-0689">Ribosomal protein</keyword>
<keyword id="KW-0694">RNA-binding</keyword>
<keyword id="KW-0699">rRNA-binding</keyword>
<dbReference type="EMBL" id="AP009389">
    <property type="protein sequence ID" value="BAF61068.1"/>
    <property type="molecule type" value="Genomic_DNA"/>
</dbReference>
<dbReference type="SMR" id="A5CY78"/>
<dbReference type="STRING" id="370438.PTH_2887"/>
<dbReference type="KEGG" id="pth:PTH_2887"/>
<dbReference type="eggNOG" id="COG0359">
    <property type="taxonomic scope" value="Bacteria"/>
</dbReference>
<dbReference type="HOGENOM" id="CLU_078938_3_0_9"/>
<dbReference type="Proteomes" id="UP000006556">
    <property type="component" value="Chromosome"/>
</dbReference>
<dbReference type="GO" id="GO:1990904">
    <property type="term" value="C:ribonucleoprotein complex"/>
    <property type="evidence" value="ECO:0007669"/>
    <property type="project" value="UniProtKB-KW"/>
</dbReference>
<dbReference type="GO" id="GO:0005840">
    <property type="term" value="C:ribosome"/>
    <property type="evidence" value="ECO:0007669"/>
    <property type="project" value="UniProtKB-KW"/>
</dbReference>
<dbReference type="GO" id="GO:0019843">
    <property type="term" value="F:rRNA binding"/>
    <property type="evidence" value="ECO:0007669"/>
    <property type="project" value="UniProtKB-UniRule"/>
</dbReference>
<dbReference type="GO" id="GO:0003735">
    <property type="term" value="F:structural constituent of ribosome"/>
    <property type="evidence" value="ECO:0007669"/>
    <property type="project" value="InterPro"/>
</dbReference>
<dbReference type="GO" id="GO:0006412">
    <property type="term" value="P:translation"/>
    <property type="evidence" value="ECO:0007669"/>
    <property type="project" value="UniProtKB-UniRule"/>
</dbReference>
<dbReference type="Gene3D" id="3.10.430.100">
    <property type="entry name" value="Ribosomal protein L9, C-terminal domain"/>
    <property type="match status" value="1"/>
</dbReference>
<dbReference type="Gene3D" id="3.40.5.10">
    <property type="entry name" value="Ribosomal protein L9, N-terminal domain"/>
    <property type="match status" value="1"/>
</dbReference>
<dbReference type="HAMAP" id="MF_00503">
    <property type="entry name" value="Ribosomal_bL9"/>
    <property type="match status" value="1"/>
</dbReference>
<dbReference type="InterPro" id="IPR000244">
    <property type="entry name" value="Ribosomal_bL9"/>
</dbReference>
<dbReference type="InterPro" id="IPR009027">
    <property type="entry name" value="Ribosomal_bL9/RNase_H1_N"/>
</dbReference>
<dbReference type="InterPro" id="IPR020594">
    <property type="entry name" value="Ribosomal_bL9_bac/chp"/>
</dbReference>
<dbReference type="InterPro" id="IPR020069">
    <property type="entry name" value="Ribosomal_bL9_C"/>
</dbReference>
<dbReference type="InterPro" id="IPR036791">
    <property type="entry name" value="Ribosomal_bL9_C_sf"/>
</dbReference>
<dbReference type="InterPro" id="IPR020070">
    <property type="entry name" value="Ribosomal_bL9_N"/>
</dbReference>
<dbReference type="InterPro" id="IPR036935">
    <property type="entry name" value="Ribosomal_bL9_N_sf"/>
</dbReference>
<dbReference type="NCBIfam" id="TIGR00158">
    <property type="entry name" value="L9"/>
    <property type="match status" value="1"/>
</dbReference>
<dbReference type="PANTHER" id="PTHR21368">
    <property type="entry name" value="50S RIBOSOMAL PROTEIN L9"/>
    <property type="match status" value="1"/>
</dbReference>
<dbReference type="Pfam" id="PF03948">
    <property type="entry name" value="Ribosomal_L9_C"/>
    <property type="match status" value="1"/>
</dbReference>
<dbReference type="Pfam" id="PF01281">
    <property type="entry name" value="Ribosomal_L9_N"/>
    <property type="match status" value="1"/>
</dbReference>
<dbReference type="SUPFAM" id="SSF55658">
    <property type="entry name" value="L9 N-domain-like"/>
    <property type="match status" value="1"/>
</dbReference>
<dbReference type="SUPFAM" id="SSF55653">
    <property type="entry name" value="Ribosomal protein L9 C-domain"/>
    <property type="match status" value="1"/>
</dbReference>
<dbReference type="PROSITE" id="PS00651">
    <property type="entry name" value="RIBOSOMAL_L9"/>
    <property type="match status" value="1"/>
</dbReference>
<comment type="function">
    <text evidence="1">Binds to the 23S rRNA.</text>
</comment>
<comment type="similarity">
    <text evidence="1">Belongs to the bacterial ribosomal protein bL9 family.</text>
</comment>
<accession>A5CY78</accession>
<evidence type="ECO:0000255" key="1">
    <source>
        <dbReference type="HAMAP-Rule" id="MF_00503"/>
    </source>
</evidence>
<evidence type="ECO:0000305" key="2"/>
<reference key="1">
    <citation type="journal article" date="2008" name="Genome Res.">
        <title>The genome of Pelotomaculum thermopropionicum reveals niche-associated evolution in anaerobic microbiota.</title>
        <authorList>
            <person name="Kosaka T."/>
            <person name="Kato S."/>
            <person name="Shimoyama T."/>
            <person name="Ishii S."/>
            <person name="Abe T."/>
            <person name="Watanabe K."/>
        </authorList>
    </citation>
    <scope>NUCLEOTIDE SEQUENCE [LARGE SCALE GENOMIC DNA]</scope>
    <source>
        <strain>DSM 13744 / JCM 10971 / SI</strain>
    </source>
</reference>
<feature type="chain" id="PRO_1000081489" description="Large ribosomal subunit protein bL9">
    <location>
        <begin position="1"/>
        <end position="148"/>
    </location>
</feature>
<name>RL9_PELTS</name>
<organism>
    <name type="scientific">Pelotomaculum thermopropionicum (strain DSM 13744 / JCM 10971 / SI)</name>
    <dbReference type="NCBI Taxonomy" id="370438"/>
    <lineage>
        <taxon>Bacteria</taxon>
        <taxon>Bacillati</taxon>
        <taxon>Bacillota</taxon>
        <taxon>Clostridia</taxon>
        <taxon>Eubacteriales</taxon>
        <taxon>Desulfotomaculaceae</taxon>
        <taxon>Pelotomaculum</taxon>
    </lineage>
</organism>
<gene>
    <name evidence="1" type="primary">rplI</name>
    <name type="ordered locus">PTH_2887</name>
</gene>
<proteinExistence type="inferred from homology"/>
<sequence>MKVILLKDVPGQGKKGEVVDVAEGYARNYLFPRGLAEEATKGRMKALGDRQKVLAMKEKKAEEEARALAARLKGVTVVVRAKTGEGGRLFGSVNNKDIAEALASQYNIVLDKKKLLLKEPIKQLGMYSVAARLHPNIQAEVRVEVAGE</sequence>
<protein>
    <recommendedName>
        <fullName evidence="1">Large ribosomal subunit protein bL9</fullName>
    </recommendedName>
    <alternativeName>
        <fullName evidence="2">50S ribosomal protein L9</fullName>
    </alternativeName>
</protein>